<feature type="chain" id="PRO_0000225459" description="Protein-glutamate methylesterase/protein-glutamine glutaminase 2">
    <location>
        <begin position="1"/>
        <end position="356"/>
    </location>
</feature>
<feature type="domain" description="Response regulatory" evidence="1">
    <location>
        <begin position="6"/>
        <end position="123"/>
    </location>
</feature>
<feature type="domain" description="CheB-type methylesterase" evidence="1">
    <location>
        <begin position="165"/>
        <end position="356"/>
    </location>
</feature>
<feature type="active site" evidence="1">
    <location>
        <position position="177"/>
    </location>
</feature>
<feature type="active site" evidence="1">
    <location>
        <position position="203"/>
    </location>
</feature>
<feature type="active site" evidence="1">
    <location>
        <position position="299"/>
    </location>
</feature>
<feature type="modified residue" description="4-aspartylphosphate" evidence="1">
    <location>
        <position position="57"/>
    </location>
</feature>
<protein>
    <recommendedName>
        <fullName evidence="1">Protein-glutamate methylesterase/protein-glutamine glutaminase 2</fullName>
        <ecNumber evidence="1">3.1.1.61</ecNumber>
        <ecNumber evidence="1">3.5.1.44</ecNumber>
    </recommendedName>
</protein>
<dbReference type="EC" id="3.1.1.61" evidence="1"/>
<dbReference type="EC" id="3.5.1.44" evidence="1"/>
<dbReference type="EMBL" id="CP000112">
    <property type="protein sequence ID" value="ABB38901.1"/>
    <property type="molecule type" value="Genomic_DNA"/>
</dbReference>
<dbReference type="RefSeq" id="WP_011368005.1">
    <property type="nucleotide sequence ID" value="NC_007519.1"/>
</dbReference>
<dbReference type="SMR" id="Q30ZJ5"/>
<dbReference type="STRING" id="207559.Dde_2104"/>
<dbReference type="KEGG" id="dde:Dde_2104"/>
<dbReference type="eggNOG" id="COG2201">
    <property type="taxonomic scope" value="Bacteria"/>
</dbReference>
<dbReference type="HOGENOM" id="CLU_000445_51_0_7"/>
<dbReference type="Proteomes" id="UP000002710">
    <property type="component" value="Chromosome"/>
</dbReference>
<dbReference type="GO" id="GO:0005737">
    <property type="term" value="C:cytoplasm"/>
    <property type="evidence" value="ECO:0007669"/>
    <property type="project" value="UniProtKB-SubCell"/>
</dbReference>
<dbReference type="GO" id="GO:0000156">
    <property type="term" value="F:phosphorelay response regulator activity"/>
    <property type="evidence" value="ECO:0007669"/>
    <property type="project" value="InterPro"/>
</dbReference>
<dbReference type="GO" id="GO:0008984">
    <property type="term" value="F:protein-glutamate methylesterase activity"/>
    <property type="evidence" value="ECO:0007669"/>
    <property type="project" value="UniProtKB-UniRule"/>
</dbReference>
<dbReference type="GO" id="GO:0050568">
    <property type="term" value="F:protein-glutamine glutaminase activity"/>
    <property type="evidence" value="ECO:0007669"/>
    <property type="project" value="UniProtKB-UniRule"/>
</dbReference>
<dbReference type="GO" id="GO:0006935">
    <property type="term" value="P:chemotaxis"/>
    <property type="evidence" value="ECO:0007669"/>
    <property type="project" value="UniProtKB-UniRule"/>
</dbReference>
<dbReference type="CDD" id="cd16432">
    <property type="entry name" value="CheB_Rec"/>
    <property type="match status" value="1"/>
</dbReference>
<dbReference type="CDD" id="cd17541">
    <property type="entry name" value="REC_CheB-like"/>
    <property type="match status" value="1"/>
</dbReference>
<dbReference type="Gene3D" id="3.40.50.2300">
    <property type="match status" value="1"/>
</dbReference>
<dbReference type="Gene3D" id="3.40.50.180">
    <property type="entry name" value="Methylesterase CheB, C-terminal domain"/>
    <property type="match status" value="1"/>
</dbReference>
<dbReference type="HAMAP" id="MF_00099">
    <property type="entry name" value="CheB_chemtxs"/>
    <property type="match status" value="1"/>
</dbReference>
<dbReference type="InterPro" id="IPR008248">
    <property type="entry name" value="CheB-like"/>
</dbReference>
<dbReference type="InterPro" id="IPR035909">
    <property type="entry name" value="CheB_C"/>
</dbReference>
<dbReference type="InterPro" id="IPR011006">
    <property type="entry name" value="CheY-like_superfamily"/>
</dbReference>
<dbReference type="InterPro" id="IPR000673">
    <property type="entry name" value="Sig_transdc_resp-reg_Me-estase"/>
</dbReference>
<dbReference type="InterPro" id="IPR001789">
    <property type="entry name" value="Sig_transdc_resp-reg_receiver"/>
</dbReference>
<dbReference type="NCBIfam" id="NF001965">
    <property type="entry name" value="PRK00742.1"/>
    <property type="match status" value="1"/>
</dbReference>
<dbReference type="NCBIfam" id="NF009206">
    <property type="entry name" value="PRK12555.1"/>
    <property type="match status" value="1"/>
</dbReference>
<dbReference type="PANTHER" id="PTHR42872">
    <property type="entry name" value="PROTEIN-GLUTAMATE METHYLESTERASE/PROTEIN-GLUTAMINE GLUTAMINASE"/>
    <property type="match status" value="1"/>
</dbReference>
<dbReference type="PANTHER" id="PTHR42872:SF6">
    <property type="entry name" value="PROTEIN-GLUTAMATE METHYLESTERASE_PROTEIN-GLUTAMINE GLUTAMINASE"/>
    <property type="match status" value="1"/>
</dbReference>
<dbReference type="Pfam" id="PF01339">
    <property type="entry name" value="CheB_methylest"/>
    <property type="match status" value="1"/>
</dbReference>
<dbReference type="Pfam" id="PF00072">
    <property type="entry name" value="Response_reg"/>
    <property type="match status" value="1"/>
</dbReference>
<dbReference type="PIRSF" id="PIRSF000876">
    <property type="entry name" value="RR_chemtxs_CheB"/>
    <property type="match status" value="1"/>
</dbReference>
<dbReference type="SMART" id="SM00448">
    <property type="entry name" value="REC"/>
    <property type="match status" value="1"/>
</dbReference>
<dbReference type="SUPFAM" id="SSF52172">
    <property type="entry name" value="CheY-like"/>
    <property type="match status" value="1"/>
</dbReference>
<dbReference type="SUPFAM" id="SSF52738">
    <property type="entry name" value="Methylesterase CheB, C-terminal domain"/>
    <property type="match status" value="1"/>
</dbReference>
<dbReference type="PROSITE" id="PS50122">
    <property type="entry name" value="CHEB"/>
    <property type="match status" value="1"/>
</dbReference>
<dbReference type="PROSITE" id="PS50110">
    <property type="entry name" value="RESPONSE_REGULATORY"/>
    <property type="match status" value="1"/>
</dbReference>
<sequence length="356" mass="38050">MARHIKVLIVDDSALVRQTLTDIFSADPELEVVGTASDPFVAVKRMETVVPDVILLDVAMPRMDGLTFLRKIMSQHPIPVVICSAVTEQGAEASFKAMEYGAVEIIQKPKVSTKQFLEESSIRICDAVKAAARAQLRKLAAKRFEVTPKLSADAMLPANAGRSVVQRTEKVVVVGASTGGTEALRVLLEAMPPDCPPIAIVQHMPEHFTAAFAGRLNSTCRIQVKEASDGDVMQRGQALIAPGNLHLLLKRSGSRYYVETKEGPLVRRHRPSVDVLFRSAARYAGNNAVAAIMTGMGDDGAAGMKELHETGAYTIAQDEATCVVYGMPHEAVKLGGVDAVLPLGALAAAIVKACNS</sequence>
<keyword id="KW-0145">Chemotaxis</keyword>
<keyword id="KW-0963">Cytoplasm</keyword>
<keyword id="KW-0378">Hydrolase</keyword>
<keyword id="KW-0597">Phosphoprotein</keyword>
<keyword id="KW-1185">Reference proteome</keyword>
<organism>
    <name type="scientific">Oleidesulfovibrio alaskensis (strain ATCC BAA-1058 / DSM 17464 / G20)</name>
    <name type="common">Desulfovibrio alaskensis</name>
    <dbReference type="NCBI Taxonomy" id="207559"/>
    <lineage>
        <taxon>Bacteria</taxon>
        <taxon>Pseudomonadati</taxon>
        <taxon>Thermodesulfobacteriota</taxon>
        <taxon>Desulfovibrionia</taxon>
        <taxon>Desulfovibrionales</taxon>
        <taxon>Desulfovibrionaceae</taxon>
        <taxon>Oleidesulfovibrio</taxon>
    </lineage>
</organism>
<accession>Q30ZJ5</accession>
<comment type="function">
    <text evidence="1">Involved in chemotaxis. Part of a chemotaxis signal transduction system that modulates chemotaxis in response to various stimuli. Catalyzes the demethylation of specific methylglutamate residues introduced into the chemoreceptors (methyl-accepting chemotaxis proteins or MCP) by CheR. Also mediates the irreversible deamidation of specific glutamine residues to glutamic acid.</text>
</comment>
<comment type="catalytic activity">
    <reaction evidence="1">
        <text>[protein]-L-glutamate 5-O-methyl ester + H2O = L-glutamyl-[protein] + methanol + H(+)</text>
        <dbReference type="Rhea" id="RHEA:23236"/>
        <dbReference type="Rhea" id="RHEA-COMP:10208"/>
        <dbReference type="Rhea" id="RHEA-COMP:10311"/>
        <dbReference type="ChEBI" id="CHEBI:15377"/>
        <dbReference type="ChEBI" id="CHEBI:15378"/>
        <dbReference type="ChEBI" id="CHEBI:17790"/>
        <dbReference type="ChEBI" id="CHEBI:29973"/>
        <dbReference type="ChEBI" id="CHEBI:82795"/>
        <dbReference type="EC" id="3.1.1.61"/>
    </reaction>
</comment>
<comment type="catalytic activity">
    <reaction evidence="1">
        <text>L-glutaminyl-[protein] + H2O = L-glutamyl-[protein] + NH4(+)</text>
        <dbReference type="Rhea" id="RHEA:16441"/>
        <dbReference type="Rhea" id="RHEA-COMP:10207"/>
        <dbReference type="Rhea" id="RHEA-COMP:10208"/>
        <dbReference type="ChEBI" id="CHEBI:15377"/>
        <dbReference type="ChEBI" id="CHEBI:28938"/>
        <dbReference type="ChEBI" id="CHEBI:29973"/>
        <dbReference type="ChEBI" id="CHEBI:30011"/>
        <dbReference type="EC" id="3.5.1.44"/>
    </reaction>
</comment>
<comment type="subcellular location">
    <subcellularLocation>
        <location evidence="1">Cytoplasm</location>
    </subcellularLocation>
</comment>
<comment type="domain">
    <text evidence="1">Contains a C-terminal catalytic domain, and an N-terminal region which modulates catalytic activity.</text>
</comment>
<comment type="PTM">
    <text evidence="1">Phosphorylated by CheA. Phosphorylation of the N-terminal regulatory domain activates the methylesterase activity.</text>
</comment>
<comment type="similarity">
    <text evidence="1">Belongs to the CheB family.</text>
</comment>
<reference key="1">
    <citation type="journal article" date="2011" name="J. Bacteriol.">
        <title>Complete genome sequence and updated annotation of Desulfovibrio alaskensis G20.</title>
        <authorList>
            <person name="Hauser L.J."/>
            <person name="Land M.L."/>
            <person name="Brown S.D."/>
            <person name="Larimer F."/>
            <person name="Keller K.L."/>
            <person name="Rapp-Giles B.J."/>
            <person name="Price M.N."/>
            <person name="Lin M."/>
            <person name="Bruce D.C."/>
            <person name="Detter J.C."/>
            <person name="Tapia R."/>
            <person name="Han C.S."/>
            <person name="Goodwin L.A."/>
            <person name="Cheng J.F."/>
            <person name="Pitluck S."/>
            <person name="Copeland A."/>
            <person name="Lucas S."/>
            <person name="Nolan M."/>
            <person name="Lapidus A.L."/>
            <person name="Palumbo A.V."/>
            <person name="Wall J.D."/>
        </authorList>
    </citation>
    <scope>NUCLEOTIDE SEQUENCE [LARGE SCALE GENOMIC DNA]</scope>
    <source>
        <strain>ATCC BAA-1058 / DSM 17464 / G20</strain>
    </source>
</reference>
<evidence type="ECO:0000255" key="1">
    <source>
        <dbReference type="HAMAP-Rule" id="MF_00099"/>
    </source>
</evidence>
<gene>
    <name evidence="1" type="primary">cheB2</name>
    <name type="ordered locus">Dde_2104</name>
</gene>
<name>CHEB2_OLEA2</name>
<proteinExistence type="inferred from homology"/>